<dbReference type="EC" id="1.3.1.9" evidence="1"/>
<dbReference type="EMBL" id="CP001600">
    <property type="protein sequence ID" value="ACR69000.1"/>
    <property type="molecule type" value="Genomic_DNA"/>
</dbReference>
<dbReference type="RefSeq" id="WP_015871146.1">
    <property type="nucleotide sequence ID" value="NZ_CP169062.1"/>
</dbReference>
<dbReference type="SMR" id="C5BFN7"/>
<dbReference type="STRING" id="67780.B6E78_02205"/>
<dbReference type="GeneID" id="69538781"/>
<dbReference type="KEGG" id="eic:NT01EI_1823"/>
<dbReference type="PATRIC" id="fig|634503.3.peg.1636"/>
<dbReference type="HOGENOM" id="CLU_057698_1_0_6"/>
<dbReference type="OrthoDB" id="9802260at2"/>
<dbReference type="UniPathway" id="UPA00094"/>
<dbReference type="Proteomes" id="UP000001485">
    <property type="component" value="Chromosome"/>
</dbReference>
<dbReference type="GO" id="GO:0004318">
    <property type="term" value="F:enoyl-[acyl-carrier-protein] reductase (NADH) activity"/>
    <property type="evidence" value="ECO:0007669"/>
    <property type="project" value="UniProtKB-UniRule"/>
</dbReference>
<dbReference type="GO" id="GO:0051287">
    <property type="term" value="F:NAD binding"/>
    <property type="evidence" value="ECO:0007669"/>
    <property type="project" value="UniProtKB-UniRule"/>
</dbReference>
<dbReference type="GO" id="GO:0050343">
    <property type="term" value="F:trans-2-enoyl-CoA reductase (NADH) activity"/>
    <property type="evidence" value="ECO:0007669"/>
    <property type="project" value="TreeGrafter"/>
</dbReference>
<dbReference type="GO" id="GO:0006633">
    <property type="term" value="P:fatty acid biosynthetic process"/>
    <property type="evidence" value="ECO:0007669"/>
    <property type="project" value="UniProtKB-UniRule"/>
</dbReference>
<dbReference type="FunFam" id="3.40.50.720:FF:000221">
    <property type="entry name" value="Enoyl-[acyl-carrier-protein] reductase [NADH]"/>
    <property type="match status" value="1"/>
</dbReference>
<dbReference type="Gene3D" id="3.40.50.720">
    <property type="entry name" value="NAD(P)-binding Rossmann-like Domain"/>
    <property type="match status" value="1"/>
</dbReference>
<dbReference type="HAMAP" id="MF_01838">
    <property type="entry name" value="FabV_reductase"/>
    <property type="match status" value="1"/>
</dbReference>
<dbReference type="InterPro" id="IPR024906">
    <property type="entry name" value="Eno_Rdtase_FAD-bd_dom"/>
</dbReference>
<dbReference type="InterPro" id="IPR024910">
    <property type="entry name" value="Enoyl-CoA_Rdtase_cat_dom"/>
</dbReference>
<dbReference type="InterPro" id="IPR050048">
    <property type="entry name" value="FabV-like_NADH_b"/>
</dbReference>
<dbReference type="InterPro" id="IPR010758">
    <property type="entry name" value="Trans-2-enoyl-CoA_reductase"/>
</dbReference>
<dbReference type="NCBIfam" id="NF043048">
    <property type="entry name" value="EnoyACPredFabV"/>
    <property type="match status" value="1"/>
</dbReference>
<dbReference type="NCBIfam" id="NF010177">
    <property type="entry name" value="PRK13656.1"/>
    <property type="match status" value="1"/>
</dbReference>
<dbReference type="PANTHER" id="PTHR37480">
    <property type="entry name" value="ENOYL-[ACYL-CARRIER-PROTEIN] REDUCTASE [NADH]"/>
    <property type="match status" value="1"/>
</dbReference>
<dbReference type="PANTHER" id="PTHR37480:SF1">
    <property type="entry name" value="ENOYL-[ACYL-CARRIER-PROTEIN] REDUCTASE [NADH]"/>
    <property type="match status" value="1"/>
</dbReference>
<dbReference type="Pfam" id="PF07055">
    <property type="entry name" value="Eno-Rase_FAD_bd"/>
    <property type="match status" value="1"/>
</dbReference>
<dbReference type="Pfam" id="PF12242">
    <property type="entry name" value="Eno-Rase_NADH_b"/>
    <property type="match status" value="1"/>
</dbReference>
<dbReference type="Pfam" id="PF12241">
    <property type="entry name" value="Enoyl_reductase"/>
    <property type="match status" value="1"/>
</dbReference>
<sequence length="397" mass="43194">MIIKPKVRGFICTTTHPVGCEANVRRQIAYTQAKGPIENGPKKVLVIGASTGYGLASRIAAAFGAGAATIGVFFEKPGTETKTGTAGWYNAAAFDKAAKEAGLYAKSVNGDAFSNECRQQVIELIKQDLGQVDLVVYSLASPVRKLPDTGEVVRSALKPIGEVYTTTAIDTNKDQIISASVEPATEEEIQNTITVMGGQDWELWMSALRDAGVLADGAKSVAYSYIGTDLTWPIYWHGTLGRAKEDLDRAAAGIRGDLAAHGGTAHVAVLKSVVTQASSAIPVMPLYISMSFKIMKEKGIHEGCMEQVDRMMRTRLYGSDMALDDHARIRMDDWELRDDVQQTCRDLWPSITSENLSQLTDYSGYKQEFLRLFGFGLDGVDYDADVNPDVQFDVVTL</sequence>
<accession>C5BFN7</accession>
<keyword id="KW-0275">Fatty acid biosynthesis</keyword>
<keyword id="KW-0276">Fatty acid metabolism</keyword>
<keyword id="KW-0444">Lipid biosynthesis</keyword>
<keyword id="KW-0443">Lipid metabolism</keyword>
<keyword id="KW-0520">NAD</keyword>
<keyword id="KW-0560">Oxidoreductase</keyword>
<gene>
    <name evidence="1" type="primary">fabV</name>
    <name type="ordered locus">NT01EI_1823</name>
</gene>
<evidence type="ECO:0000255" key="1">
    <source>
        <dbReference type="HAMAP-Rule" id="MF_01838"/>
    </source>
</evidence>
<name>FABV_EDWI9</name>
<protein>
    <recommendedName>
        <fullName evidence="1">Enoyl-[acyl-carrier-protein] reductase [NADH]</fullName>
        <shortName evidence="1">ENR</shortName>
        <ecNumber evidence="1">1.3.1.9</ecNumber>
    </recommendedName>
</protein>
<feature type="chain" id="PRO_1000216086" description="Enoyl-[acyl-carrier-protein] reductase [NADH]">
    <location>
        <begin position="1"/>
        <end position="397"/>
    </location>
</feature>
<feature type="active site" description="Proton donor" evidence="1">
    <location>
        <position position="235"/>
    </location>
</feature>
<feature type="binding site" evidence="1">
    <location>
        <begin position="48"/>
        <end position="53"/>
    </location>
    <ligand>
        <name>NAD(+)</name>
        <dbReference type="ChEBI" id="CHEBI:57540"/>
    </ligand>
</feature>
<feature type="binding site" evidence="1">
    <location>
        <begin position="74"/>
        <end position="75"/>
    </location>
    <ligand>
        <name>NAD(+)</name>
        <dbReference type="ChEBI" id="CHEBI:57540"/>
    </ligand>
</feature>
<feature type="binding site" evidence="1">
    <location>
        <begin position="111"/>
        <end position="112"/>
    </location>
    <ligand>
        <name>NAD(+)</name>
        <dbReference type="ChEBI" id="CHEBI:57540"/>
    </ligand>
</feature>
<feature type="binding site" evidence="1">
    <location>
        <begin position="139"/>
        <end position="140"/>
    </location>
    <ligand>
        <name>NAD(+)</name>
        <dbReference type="ChEBI" id="CHEBI:57540"/>
    </ligand>
</feature>
<feature type="binding site" evidence="1">
    <location>
        <position position="225"/>
    </location>
    <ligand>
        <name>substrate</name>
    </ligand>
</feature>
<feature type="binding site" evidence="1">
    <location>
        <position position="244"/>
    </location>
    <ligand>
        <name>NAD(+)</name>
        <dbReference type="ChEBI" id="CHEBI:57540"/>
    </ligand>
</feature>
<feature type="binding site" evidence="1">
    <location>
        <begin position="273"/>
        <end position="275"/>
    </location>
    <ligand>
        <name>NAD(+)</name>
        <dbReference type="ChEBI" id="CHEBI:57540"/>
    </ligand>
</feature>
<feature type="site" description="Plays an important role in discriminating NADH against NADPH" evidence="1">
    <location>
        <position position="75"/>
    </location>
</feature>
<comment type="function">
    <text evidence="1">Involved in the final reduction of the elongation cycle of fatty acid synthesis (FAS II). Catalyzes the reduction of a carbon-carbon double bond in an enoyl moiety that is covalently linked to an acyl carrier protein (ACP).</text>
</comment>
<comment type="catalytic activity">
    <reaction evidence="1">
        <text>a 2,3-saturated acyl-[ACP] + NAD(+) = a (2E)-enoyl-[ACP] + NADH + H(+)</text>
        <dbReference type="Rhea" id="RHEA:10240"/>
        <dbReference type="Rhea" id="RHEA-COMP:9925"/>
        <dbReference type="Rhea" id="RHEA-COMP:9926"/>
        <dbReference type="ChEBI" id="CHEBI:15378"/>
        <dbReference type="ChEBI" id="CHEBI:57540"/>
        <dbReference type="ChEBI" id="CHEBI:57945"/>
        <dbReference type="ChEBI" id="CHEBI:78784"/>
        <dbReference type="ChEBI" id="CHEBI:78785"/>
        <dbReference type="EC" id="1.3.1.9"/>
    </reaction>
</comment>
<comment type="pathway">
    <text evidence="1">Lipid metabolism; fatty acid biosynthesis.</text>
</comment>
<comment type="subunit">
    <text evidence="1">Monomer.</text>
</comment>
<comment type="similarity">
    <text evidence="1">Belongs to the TER reductase family.</text>
</comment>
<organism>
    <name type="scientific">Edwardsiella ictaluri (strain 93-146)</name>
    <dbReference type="NCBI Taxonomy" id="634503"/>
    <lineage>
        <taxon>Bacteria</taxon>
        <taxon>Pseudomonadati</taxon>
        <taxon>Pseudomonadota</taxon>
        <taxon>Gammaproteobacteria</taxon>
        <taxon>Enterobacterales</taxon>
        <taxon>Hafniaceae</taxon>
        <taxon>Edwardsiella</taxon>
    </lineage>
</organism>
<proteinExistence type="inferred from homology"/>
<reference key="1">
    <citation type="submission" date="2009-03" db="EMBL/GenBank/DDBJ databases">
        <title>Complete genome sequence of Edwardsiella ictaluri 93-146.</title>
        <authorList>
            <person name="Williams M.L."/>
            <person name="Gillaspy A.F."/>
            <person name="Dyer D.W."/>
            <person name="Thune R.L."/>
            <person name="Waldbieser G.C."/>
            <person name="Schuster S.C."/>
            <person name="Gipson J."/>
            <person name="Zaitshik J."/>
            <person name="Landry C."/>
            <person name="Lawrence M.L."/>
        </authorList>
    </citation>
    <scope>NUCLEOTIDE SEQUENCE [LARGE SCALE GENOMIC DNA]</scope>
    <source>
        <strain>93-146</strain>
    </source>
</reference>